<comment type="function">
    <text evidence="2">Mitochondrial glycine transporter that imports glycine into the mitochondrial matrix. Plays an important role in providing glycine for the first enzymatic step in heme biosynthesis, the condensation of glycine with succinyl-CoA to produce 5-aminolevulinate (ALA) in the mitochondrial matrix.</text>
</comment>
<comment type="catalytic activity">
    <reaction evidence="1">
        <text>glycine(in) = glycine(out)</text>
        <dbReference type="Rhea" id="RHEA:70715"/>
        <dbReference type="ChEBI" id="CHEBI:57305"/>
    </reaction>
</comment>
<comment type="subcellular location">
    <subcellularLocation>
        <location evidence="2">Mitochondrion inner membrane</location>
        <topology evidence="2">Multi-pass membrane protein</topology>
    </subcellularLocation>
</comment>
<comment type="similarity">
    <text evidence="2">Belongs to the mitochondrial carrier (TC 2.A.29) family. SLC25A38 subfamily.</text>
</comment>
<gene>
    <name type="ORF">Kpol_1043p32</name>
</gene>
<dbReference type="EMBL" id="DS480397">
    <property type="protein sequence ID" value="EDO17842.1"/>
    <property type="molecule type" value="Genomic_DNA"/>
</dbReference>
<dbReference type="RefSeq" id="XP_001645700.1">
    <property type="nucleotide sequence ID" value="XM_001645650.1"/>
</dbReference>
<dbReference type="SMR" id="A7TIQ0"/>
<dbReference type="FunCoup" id="A7TIQ0">
    <property type="interactions" value="115"/>
</dbReference>
<dbReference type="STRING" id="436907.A7TIQ0"/>
<dbReference type="GeneID" id="5546096"/>
<dbReference type="KEGG" id="vpo:Kpol_1043p32"/>
<dbReference type="eggNOG" id="KOG0766">
    <property type="taxonomic scope" value="Eukaryota"/>
</dbReference>
<dbReference type="HOGENOM" id="CLU_015166_0_3_1"/>
<dbReference type="InParanoid" id="A7TIQ0"/>
<dbReference type="OMA" id="WGIYEEL"/>
<dbReference type="OrthoDB" id="1924968at2759"/>
<dbReference type="PhylomeDB" id="A7TIQ0"/>
<dbReference type="Proteomes" id="UP000000267">
    <property type="component" value="Unassembled WGS sequence"/>
</dbReference>
<dbReference type="GO" id="GO:0005743">
    <property type="term" value="C:mitochondrial inner membrane"/>
    <property type="evidence" value="ECO:0007669"/>
    <property type="project" value="UniProtKB-SubCell"/>
</dbReference>
<dbReference type="GO" id="GO:0015187">
    <property type="term" value="F:glycine transmembrane transporter activity"/>
    <property type="evidence" value="ECO:0007669"/>
    <property type="project" value="UniProtKB-UniRule"/>
</dbReference>
<dbReference type="GO" id="GO:1904983">
    <property type="term" value="P:glycine import into mitochondrion"/>
    <property type="evidence" value="ECO:0007669"/>
    <property type="project" value="UniProtKB-UniRule"/>
</dbReference>
<dbReference type="FunFam" id="1.50.40.10:FF:000103">
    <property type="entry name" value="Mitochondrial glycine transporter"/>
    <property type="match status" value="1"/>
</dbReference>
<dbReference type="Gene3D" id="1.50.40.10">
    <property type="entry name" value="Mitochondrial carrier domain"/>
    <property type="match status" value="1"/>
</dbReference>
<dbReference type="HAMAP" id="MF_03064">
    <property type="entry name" value="SLC25A38"/>
    <property type="match status" value="1"/>
</dbReference>
<dbReference type="InterPro" id="IPR030847">
    <property type="entry name" value="Hem25/SLC25A38"/>
</dbReference>
<dbReference type="InterPro" id="IPR002067">
    <property type="entry name" value="Mit_carrier"/>
</dbReference>
<dbReference type="InterPro" id="IPR018108">
    <property type="entry name" value="Mitochondrial_sb/sol_carrier"/>
</dbReference>
<dbReference type="InterPro" id="IPR023395">
    <property type="entry name" value="Mt_carrier_dom_sf"/>
</dbReference>
<dbReference type="PANTHER" id="PTHR46181">
    <property type="entry name" value="MITOCHONDRIAL GLYCINE TRANSPORTER"/>
    <property type="match status" value="1"/>
</dbReference>
<dbReference type="PANTHER" id="PTHR46181:SF3">
    <property type="entry name" value="MITOCHONDRIAL GLYCINE TRANSPORTER"/>
    <property type="match status" value="1"/>
</dbReference>
<dbReference type="Pfam" id="PF00153">
    <property type="entry name" value="Mito_carr"/>
    <property type="match status" value="3"/>
</dbReference>
<dbReference type="PRINTS" id="PR00926">
    <property type="entry name" value="MITOCARRIER"/>
</dbReference>
<dbReference type="SUPFAM" id="SSF103506">
    <property type="entry name" value="Mitochondrial carrier"/>
    <property type="match status" value="1"/>
</dbReference>
<dbReference type="PROSITE" id="PS50920">
    <property type="entry name" value="SOLCAR"/>
    <property type="match status" value="3"/>
</dbReference>
<accession>A7TIQ0</accession>
<organism>
    <name type="scientific">Vanderwaltozyma polyspora (strain ATCC 22028 / DSM 70294 / BCRC 21397 / CBS 2163 / NBRC 10782 / NRRL Y-8283 / UCD 57-17)</name>
    <name type="common">Kluyveromyces polysporus</name>
    <dbReference type="NCBI Taxonomy" id="436907"/>
    <lineage>
        <taxon>Eukaryota</taxon>
        <taxon>Fungi</taxon>
        <taxon>Dikarya</taxon>
        <taxon>Ascomycota</taxon>
        <taxon>Saccharomycotina</taxon>
        <taxon>Saccharomycetes</taxon>
        <taxon>Saccharomycetales</taxon>
        <taxon>Saccharomycetaceae</taxon>
        <taxon>Vanderwaltozyma</taxon>
    </lineage>
</organism>
<proteinExistence type="inferred from homology"/>
<evidence type="ECO:0000250" key="1">
    <source>
        <dbReference type="UniProtKB" id="Q96DW6"/>
    </source>
</evidence>
<evidence type="ECO:0000255" key="2">
    <source>
        <dbReference type="HAMAP-Rule" id="MF_03064"/>
    </source>
</evidence>
<protein>
    <recommendedName>
        <fullName evidence="2">Mitochondrial glycine transporter</fullName>
    </recommendedName>
    <alternativeName>
        <fullName evidence="2">Solute carrier family 25 member 38 homolog</fullName>
    </alternativeName>
</protein>
<reference key="1">
    <citation type="journal article" date="2007" name="Proc. Natl. Acad. Sci. U.S.A.">
        <title>Independent sorting-out of thousands of duplicated gene pairs in two yeast species descended from a whole-genome duplication.</title>
        <authorList>
            <person name="Scannell D.R."/>
            <person name="Frank A.C."/>
            <person name="Conant G.C."/>
            <person name="Byrne K.P."/>
            <person name="Woolfit M."/>
            <person name="Wolfe K.H."/>
        </authorList>
    </citation>
    <scope>NUCLEOTIDE SEQUENCE [LARGE SCALE GENOMIC DNA]</scope>
    <source>
        <strain>ATCC 22028 / DSM 70294 / BCRC 21397 / CBS 2163 / NBRC 10782 / NRRL Y-8283 / UCD 57-17</strain>
    </source>
</reference>
<name>S2538_VANPO</name>
<sequence length="298" mass="33124">MANTTKTRTHLIGGFFGGLTSAVALQPLDLLKTRIQQHQSQSIWSIVKNSKGFSELWRGTLPSAIRTSLGSALYLSSLNLMRTAIAKSKTNYNDGASKSSLLPKLTTYENLISGALARGAVGYMTMPVTVIKVRYESTLYSYTSLSQAVKHIYQSERIPGFFRGFGPTLVRDAPYSGIYVLLYEKAKEVVPKLLPRKFIKFDKHGSYLTSTSTLVNSTSAILSACLATTITAPFDTIKTRMQLEPKRYTNVWFTFKSIIKNEGILKLFSGLSMRLTRKALSAGIAWGIYEELIKLNKF</sequence>
<keyword id="KW-0472">Membrane</keyword>
<keyword id="KW-0496">Mitochondrion</keyword>
<keyword id="KW-0999">Mitochondrion inner membrane</keyword>
<keyword id="KW-1185">Reference proteome</keyword>
<keyword id="KW-0677">Repeat</keyword>
<keyword id="KW-0812">Transmembrane</keyword>
<keyword id="KW-1133">Transmembrane helix</keyword>
<keyword id="KW-0813">Transport</keyword>
<feature type="chain" id="PRO_0000378945" description="Mitochondrial glycine transporter">
    <location>
        <begin position="1"/>
        <end position="298"/>
    </location>
</feature>
<feature type="transmembrane region" description="Helical; Name=1" evidence="2">
    <location>
        <begin position="11"/>
        <end position="36"/>
    </location>
</feature>
<feature type="transmembrane region" description="Helical; Name=2" evidence="2">
    <location>
        <begin position="59"/>
        <end position="85"/>
    </location>
</feature>
<feature type="transmembrane region" description="Helical; Name=3" evidence="2">
    <location>
        <begin position="111"/>
        <end position="136"/>
    </location>
</feature>
<feature type="transmembrane region" description="Helical; Name=4" evidence="2">
    <location>
        <begin position="164"/>
        <end position="187"/>
    </location>
</feature>
<feature type="transmembrane region" description="Helical; Name=5" evidence="2">
    <location>
        <begin position="215"/>
        <end position="241"/>
    </location>
</feature>
<feature type="transmembrane region" description="Helical; Name=6" evidence="2">
    <location>
        <begin position="270"/>
        <end position="288"/>
    </location>
</feature>
<feature type="repeat" description="Solcar 1" evidence="2">
    <location>
        <begin position="5"/>
        <end position="84"/>
    </location>
</feature>
<feature type="repeat" description="Solcar 2" evidence="2">
    <location>
        <begin position="105"/>
        <end position="189"/>
    </location>
</feature>
<feature type="repeat" description="Solcar 3" evidence="2">
    <location>
        <begin position="211"/>
        <end position="295"/>
    </location>
</feature>